<organism>
    <name type="scientific">African swine fever virus (isolate Pig/Haiti/H811/1981)</name>
    <name type="common">ASFV</name>
    <dbReference type="NCBI Taxonomy" id="82814"/>
    <lineage>
        <taxon>Viruses</taxon>
        <taxon>Varidnaviria</taxon>
        <taxon>Bamfordvirae</taxon>
        <taxon>Nucleocytoviricota</taxon>
        <taxon>Pokkesviricetes</taxon>
        <taxon>Asfuvirales</taxon>
        <taxon>Asfarviridae</taxon>
        <taxon>Asfivirus</taxon>
        <taxon>African swine fever virus</taxon>
    </lineage>
</organism>
<keyword id="KW-1074">Activation of host NF-kappa-B by virus</keyword>
<keyword id="KW-1035">Host cytoplasm</keyword>
<keyword id="KW-0945">Host-virus interaction</keyword>
<keyword id="KW-1085">Inhibition of host caspases by virus</keyword>
<keyword id="KW-0426">Late protein</keyword>
<keyword id="KW-0479">Metal-binding</keyword>
<keyword id="KW-1119">Modulation of host cell apoptosis by virus</keyword>
<keyword id="KW-0946">Virion</keyword>
<keyword id="KW-0862">Zinc</keyword>
<organismHost>
    <name type="scientific">Ornithodoros</name>
    <name type="common">relapsing fever ticks</name>
    <dbReference type="NCBI Taxonomy" id="6937"/>
</organismHost>
<organismHost>
    <name type="scientific">Sus scrofa</name>
    <name type="common">Pig</name>
    <dbReference type="NCBI Taxonomy" id="9823"/>
</organismHost>
<gene>
    <name type="primary">p27</name>
    <name type="ORF">4CL</name>
</gene>
<feature type="chain" id="PRO_0000122379" description="Inhibitor of apoptosis protein">
    <location>
        <begin position="1"/>
        <end position="224"/>
    </location>
</feature>
<feature type="repeat" description="BIR">
    <location>
        <begin position="29"/>
        <end position="92"/>
    </location>
</feature>
<feature type="binding site" evidence="2">
    <location>
        <position position="62"/>
    </location>
    <ligand>
        <name>Zn(2+)</name>
        <dbReference type="ChEBI" id="CHEBI:29105"/>
    </ligand>
</feature>
<feature type="binding site" evidence="2">
    <location>
        <position position="65"/>
    </location>
    <ligand>
        <name>Zn(2+)</name>
        <dbReference type="ChEBI" id="CHEBI:29105"/>
    </ligand>
</feature>
<feature type="binding site" evidence="2">
    <location>
        <position position="82"/>
    </location>
    <ligand>
        <name>Zn(2+)</name>
        <dbReference type="ChEBI" id="CHEBI:29105"/>
    </ligand>
</feature>
<feature type="binding site" evidence="2">
    <location>
        <position position="89"/>
    </location>
    <ligand>
        <name>Zn(2+)</name>
        <dbReference type="ChEBI" id="CHEBI:29105"/>
    </ligand>
</feature>
<comment type="function">
    <text evidence="1">Prevent apoptosis of host cell by inhibiting caspase-3/CASP3 activation to promote the viral replication. Also induces the activation of host NF-kappaB.</text>
</comment>
<comment type="subunit">
    <text evidence="1">Interacts with subunit p17 of host CASP3.</text>
</comment>
<comment type="subcellular location">
    <subcellularLocation>
        <location evidence="1">Host cytoplasm</location>
    </subcellularLocation>
    <subcellularLocation>
        <location evidence="1">Virion</location>
    </subcellularLocation>
    <text evidence="1">Probably accumulates in the perinuclear cytoplasmic viral factories. Found in association with viral nucleoid.</text>
</comment>
<comment type="induction">
    <text evidence="3">Expressed in the late phase of the viral replicative cycle.</text>
</comment>
<comment type="similarity">
    <text evidence="3">Belongs to the asfivirus IAP family.</text>
</comment>
<name>IAP_ASFH8</name>
<protein>
    <recommendedName>
        <fullName>Inhibitor of apoptosis protein</fullName>
        <shortName>IAP</shortName>
    </recommendedName>
    <alternativeName>
        <fullName>IAP-like protein p27</fullName>
    </alternativeName>
</protein>
<dbReference type="EMBL" id="U91735">
    <property type="protein sequence ID" value="AAB58390.1"/>
    <property type="molecule type" value="Genomic_DNA"/>
</dbReference>
<dbReference type="SMR" id="P69183"/>
<dbReference type="KEGG" id="vg:22220415"/>
<dbReference type="GO" id="GO:0030430">
    <property type="term" value="C:host cell cytoplasm"/>
    <property type="evidence" value="ECO:0007669"/>
    <property type="project" value="UniProtKB-SubCell"/>
</dbReference>
<dbReference type="GO" id="GO:0044423">
    <property type="term" value="C:virion component"/>
    <property type="evidence" value="ECO:0007669"/>
    <property type="project" value="UniProtKB-KW"/>
</dbReference>
<dbReference type="GO" id="GO:0046872">
    <property type="term" value="F:metal ion binding"/>
    <property type="evidence" value="ECO:0007669"/>
    <property type="project" value="UniProtKB-KW"/>
</dbReference>
<dbReference type="GO" id="GO:0085033">
    <property type="term" value="P:symbiont-mediated activation of host NF-kappaB cascade"/>
    <property type="evidence" value="ECO:0007669"/>
    <property type="project" value="UniProtKB-KW"/>
</dbReference>
<dbReference type="GO" id="GO:0033668">
    <property type="term" value="P:symbiont-mediated suppression of host apoptosis"/>
    <property type="evidence" value="ECO:0007669"/>
    <property type="project" value="UniProtKB-KW"/>
</dbReference>
<dbReference type="CDD" id="cd00022">
    <property type="entry name" value="BIR"/>
    <property type="match status" value="1"/>
</dbReference>
<dbReference type="FunFam" id="1.10.1170.10:FF:000014">
    <property type="entry name" value="IAP-like protein p27"/>
    <property type="match status" value="1"/>
</dbReference>
<dbReference type="Gene3D" id="1.10.1170.10">
    <property type="entry name" value="Inhibitor Of Apoptosis Protein (2mihbC-IAP-1), Chain A"/>
    <property type="match status" value="1"/>
</dbReference>
<dbReference type="InterPro" id="IPR010549">
    <property type="entry name" value="ASFV_p27_C"/>
</dbReference>
<dbReference type="InterPro" id="IPR001370">
    <property type="entry name" value="BIR_rpt"/>
</dbReference>
<dbReference type="Pfam" id="PF06556">
    <property type="entry name" value="ASFV_p27"/>
    <property type="match status" value="1"/>
</dbReference>
<dbReference type="Pfam" id="PF00653">
    <property type="entry name" value="BIR"/>
    <property type="match status" value="1"/>
</dbReference>
<dbReference type="SMART" id="SM00238">
    <property type="entry name" value="BIR"/>
    <property type="match status" value="1"/>
</dbReference>
<dbReference type="SUPFAM" id="SSF57924">
    <property type="entry name" value="Inhibitor of apoptosis (IAP) repeat"/>
    <property type="match status" value="1"/>
</dbReference>
<dbReference type="PROSITE" id="PS01282">
    <property type="entry name" value="BIR_REPEAT_1"/>
    <property type="match status" value="1"/>
</dbReference>
<dbReference type="PROSITE" id="PS50143">
    <property type="entry name" value="BIR_REPEAT_2"/>
    <property type="match status" value="1"/>
</dbReference>
<reference key="1">
    <citation type="journal article" date="1997" name="Virology">
        <title>A BIR motif containing gene of African swine fever virus, 4CL, is nonessential for growth in vitro and viral virulence.</title>
        <authorList>
            <person name="Neilan J.G."/>
            <person name="Lu Z."/>
            <person name="Kutish G.F."/>
            <person name="Zsak L."/>
            <person name="Burrage T.G."/>
            <person name="Borca M.V."/>
            <person name="Carrillo C."/>
            <person name="Rock D.L."/>
        </authorList>
    </citation>
    <scope>NUCLEOTIDE SEQUENCE [GENOMIC DNA]</scope>
</reference>
<sequence length="224" mass="26618">MFPKINTIDPYISLRLFEVKPKYVGYSSIDARNQSFAIHGIKNYEKFSNAGFFYTSPTEITCYCCGMKFCNWLYEKHPLQVHGFWSRNCGFMRATLGIIGLKKMIDSYNDYYNNEVFVKHKNRVYTHKRLEDMGFSKPFMRFILANAFIPPYRKYIHKIILNERYFTFKFAAHLLSFHKVNLDNQTTYCMTCGIEPIKKDENFCNACKTLNYKHYKTLNFSVKL</sequence>
<evidence type="ECO:0000250" key="1">
    <source>
        <dbReference type="UniProtKB" id="P69180"/>
    </source>
</evidence>
<evidence type="ECO:0000255" key="2">
    <source>
        <dbReference type="PROSITE-ProRule" id="PRU00029"/>
    </source>
</evidence>
<evidence type="ECO:0000305" key="3"/>
<accession>P69183</accession>
<accession>O12627</accession>
<accession>O12628</accession>
<accession>O12629</accession>
<accession>O12630</accession>
<accession>O12631</accession>
<accession>O12904</accession>
<accession>O12905</accession>
<accession>O12906</accession>
<accession>O12907</accession>
<accession>O12908</accession>
<accession>Q65138</accession>
<proteinExistence type="inferred from homology"/>